<comment type="function">
    <text evidence="5">Ribosomal protein P0 is the functional equivalent of E.coli protein L10.</text>
</comment>
<comment type="subunit">
    <text evidence="1">P0 forms a pentameric complex by interaction with dimers of P1 and P2.</text>
</comment>
<comment type="subcellular location">
    <subcellularLocation>
        <location evidence="1">Nucleus</location>
    </subcellularLocation>
    <subcellularLocation>
        <location evidence="1">Cytoplasm</location>
    </subcellularLocation>
</comment>
<comment type="allergen">
    <text evidence="3">Causes an allergic reaction in horses. Binds to IgE of 19 horses from Switzerland suffering from insect bite hypersensitivity (IBH), a recurrent seasonal dermatitis of the horse, caused by bites of Culicoides (midge) and sometimes Simulium (black fly) species. Binds to IgE of all 18 healthy control horses from Switzerland exposed to the bites of these insects, and of 8 horses from Iceland which had not been exposed to Culicoides midges. There is no significant difference in IgE-binding between the three groups of horses. Does not induce sulfidoleukotriene (sLT) release from peripheral blood leukocytes (PBLs) in any of the 5 horses tested affected by IBH.</text>
</comment>
<comment type="similarity">
    <text evidence="5">Belongs to the universal ribosomal protein uL10 family.</text>
</comment>
<keyword id="KW-0020">Allergen</keyword>
<keyword id="KW-0963">Cytoplasm</keyword>
<keyword id="KW-0539">Nucleus</keyword>
<keyword id="KW-0687">Ribonucleoprotein</keyword>
<keyword id="KW-0689">Ribosomal protein</keyword>
<reference evidence="6" key="1">
    <citation type="journal article" date="2004" name="Vet. Immunol. Immunopathol.">
        <title>Cloning and sequencing of a cDNA expressing a ribosomal P0 peptide from Culicoides nubeculosus (Diptera).</title>
        <authorList>
            <person name="Althaus H."/>
            <person name="Muller N."/>
            <person name="Busato A."/>
            <person name="Mellor P.S."/>
            <person name="Torsteinsdottir S."/>
            <person name="Marti E."/>
        </authorList>
    </citation>
    <scope>NUCLEOTIDE SEQUENCE [MRNA]</scope>
    <scope>ALLERGEN</scope>
</reference>
<feature type="chain" id="PRO_0000447854" description="Large ribosomal subunit protein uL10">
    <location>
        <begin position="1" status="less than"/>
        <end position="78"/>
    </location>
</feature>
<feature type="region of interest" description="Disordered" evidence="2">
    <location>
        <begin position="40"/>
        <end position="78"/>
    </location>
</feature>
<feature type="compositionally biased region" description="Low complexity" evidence="2">
    <location>
        <begin position="40"/>
        <end position="50"/>
    </location>
</feature>
<feature type="compositionally biased region" description="Basic and acidic residues" evidence="2">
    <location>
        <begin position="51"/>
        <end position="64"/>
    </location>
</feature>
<feature type="non-terminal residue" evidence="6">
    <location>
        <position position="1"/>
    </location>
</feature>
<organism evidence="6">
    <name type="scientific">Culicoides nubeculosus</name>
    <name type="common">Biting midge</name>
    <dbReference type="NCBI Taxonomy" id="144565"/>
    <lineage>
        <taxon>Eukaryota</taxon>
        <taxon>Metazoa</taxon>
        <taxon>Ecdysozoa</taxon>
        <taxon>Arthropoda</taxon>
        <taxon>Hexapoda</taxon>
        <taxon>Insecta</taxon>
        <taxon>Pterygota</taxon>
        <taxon>Neoptera</taxon>
        <taxon>Endopterygota</taxon>
        <taxon>Diptera</taxon>
        <taxon>Nematocera</taxon>
        <taxon>Chironomoidea</taxon>
        <taxon>Ceratopogonidae</taxon>
        <taxon>Ceratopogoninae</taxon>
        <taxon>Culicoides</taxon>
        <taxon>Monoculicoides</taxon>
    </lineage>
</organism>
<name>RLA0_CULNU</name>
<protein>
    <recommendedName>
        <fullName evidence="5">Large ribosomal subunit protein uL10</fullName>
    </recommendedName>
    <alternativeName>
        <fullName evidence="5">60S acidic ribosomal protein P0</fullName>
    </alternativeName>
    <alternativeName>
        <fullName evidence="4">Ribosomal P0 protein</fullName>
    </alternativeName>
    <allergenName evidence="4">Cul n 1</allergenName>
</protein>
<evidence type="ECO:0000250" key="1">
    <source>
        <dbReference type="UniProtKB" id="P05388"/>
    </source>
</evidence>
<evidence type="ECO:0000256" key="2">
    <source>
        <dbReference type="SAM" id="MobiDB-lite"/>
    </source>
</evidence>
<evidence type="ECO:0000269" key="3">
    <source>
    </source>
</evidence>
<evidence type="ECO:0000303" key="4">
    <source>
    </source>
</evidence>
<evidence type="ECO:0000305" key="5"/>
<evidence type="ECO:0000312" key="6">
    <source>
        <dbReference type="EMBL" id="AAK00899.1"/>
    </source>
</evidence>
<sequence>APHSIANGFKNLLALAATTDVDSKEAETIKEYIKDPSKIAAAAAATAPAAETKKEEKKEEKKEETEESDDDIGLSLFH</sequence>
<dbReference type="EMBL" id="AF314650">
    <property type="protein sequence ID" value="AAK00899.1"/>
    <property type="molecule type" value="mRNA"/>
</dbReference>
<dbReference type="SMR" id="Q9BMP6"/>
<dbReference type="Allergome" id="1352">
    <property type="allergen name" value="Cul n 1"/>
</dbReference>
<dbReference type="GO" id="GO:0005737">
    <property type="term" value="C:cytoplasm"/>
    <property type="evidence" value="ECO:0000250"/>
    <property type="project" value="UniProtKB"/>
</dbReference>
<dbReference type="GO" id="GO:0022625">
    <property type="term" value="C:cytosolic large ribosomal subunit"/>
    <property type="evidence" value="ECO:0000250"/>
    <property type="project" value="UniProtKB"/>
</dbReference>
<dbReference type="GO" id="GO:0005634">
    <property type="term" value="C:nucleus"/>
    <property type="evidence" value="ECO:0000250"/>
    <property type="project" value="UniProtKB"/>
</dbReference>
<dbReference type="GO" id="GO:0070180">
    <property type="term" value="F:large ribosomal subunit rRNA binding"/>
    <property type="evidence" value="ECO:0007669"/>
    <property type="project" value="TreeGrafter"/>
</dbReference>
<dbReference type="GO" id="GO:0003735">
    <property type="term" value="F:structural constituent of ribosome"/>
    <property type="evidence" value="ECO:0007669"/>
    <property type="project" value="TreeGrafter"/>
</dbReference>
<dbReference type="GO" id="GO:0002181">
    <property type="term" value="P:cytoplasmic translation"/>
    <property type="evidence" value="ECO:0007669"/>
    <property type="project" value="TreeGrafter"/>
</dbReference>
<dbReference type="GO" id="GO:0000027">
    <property type="term" value="P:ribosomal large subunit assembly"/>
    <property type="evidence" value="ECO:0007669"/>
    <property type="project" value="TreeGrafter"/>
</dbReference>
<dbReference type="InterPro" id="IPR050323">
    <property type="entry name" value="Ribosomal_protein_uL10"/>
</dbReference>
<dbReference type="PANTHER" id="PTHR45699">
    <property type="entry name" value="60S ACIDIC RIBOSOMAL PROTEIN P0"/>
    <property type="match status" value="1"/>
</dbReference>
<dbReference type="PANTHER" id="PTHR45699:SF3">
    <property type="entry name" value="LARGE RIBOSOMAL SUBUNIT PROTEIN UL10"/>
    <property type="match status" value="1"/>
</dbReference>
<dbReference type="Pfam" id="PF00428">
    <property type="entry name" value="Ribosomal_60s"/>
    <property type="match status" value="1"/>
</dbReference>
<proteinExistence type="evidence at protein level"/>
<accession>Q9BMP6</accession>